<accession>P33862</accession>
<dbReference type="EMBL" id="X69198">
    <property type="protein sequence ID" value="CAA48984.1"/>
    <property type="molecule type" value="Genomic_DNA"/>
</dbReference>
<dbReference type="PIR" id="E36841">
    <property type="entry name" value="E36841"/>
</dbReference>
<dbReference type="RefSeq" id="NP_042087.1">
    <property type="nucleotide sequence ID" value="NC_001611.1"/>
</dbReference>
<dbReference type="SMR" id="P33862"/>
<dbReference type="GeneID" id="1486408"/>
<dbReference type="KEGG" id="vg:1486408"/>
<dbReference type="Proteomes" id="UP000002060">
    <property type="component" value="Segment"/>
</dbReference>
<dbReference type="InterPro" id="IPR007585">
    <property type="entry name" value="Poxvirus_E2"/>
</dbReference>
<dbReference type="InterPro" id="IPR021155">
    <property type="entry name" value="Poxvirus_E2/O1"/>
</dbReference>
<dbReference type="Pfam" id="PF04497">
    <property type="entry name" value="Pox_E2-like"/>
    <property type="match status" value="1"/>
</dbReference>
<dbReference type="PIRSF" id="PIRSF015692">
    <property type="entry name" value="VAC_E2L"/>
    <property type="match status" value="1"/>
</dbReference>
<gene>
    <name type="primary">OPG064</name>
    <name type="ORF">E2L</name>
</gene>
<organismHost>
    <name type="scientific">Homo sapiens</name>
    <name type="common">Human</name>
    <dbReference type="NCBI Taxonomy" id="9606"/>
</organismHost>
<name>PG064_VAR67</name>
<protein>
    <recommendedName>
        <fullName>Protein OPG064</fullName>
    </recommendedName>
    <alternativeName>
        <fullName>Protein E2</fullName>
    </alternativeName>
</protein>
<comment type="function">
    <text evidence="1">Plays a role in intracellular enveloped virus (IEV) transport to the cell surface on microtubules. Together with protein OPG056, forms a complex that interacts with host KLC2 (kinesin light chain isoform 2) to engage the kinesin-1 complex and thereby promote IEV trafficking.</text>
</comment>
<comment type="subunit">
    <text evidence="1">Interacts with host KLC2; this interaction promotes IEV trafficking by engaging the host kinesin-1 complex. Interacts with protein OPG056.</text>
</comment>
<comment type="induction">
    <text evidence="1">Expressed in the early phase of the viral replicative cycle.</text>
</comment>
<comment type="PTM">
    <text evidence="1">N-acetylated on initiator methionine by host.</text>
</comment>
<comment type="similarity">
    <text evidence="2">Belongs to the orthopoxvirus OPG064 family.</text>
</comment>
<evidence type="ECO:0000250" key="1">
    <source>
        <dbReference type="UniProtKB" id="P21604"/>
    </source>
</evidence>
<evidence type="ECO:0000305" key="2"/>
<proteinExistence type="inferred from homology"/>
<sequence length="737" mass="85958">MISVTDIRRAFLDNECHTITKAFGYLHEDKAIALIKIGFHPTYLPKVLYNNVVEFVPEKLYLFKPRTVAPLDLISTITKLKNVDKFASHINYHKNSILITGDKSLIVKCMPYMIISDDDIRFIREQFVGTNSIEYILSFINKESIYRMSYQFSENEIVTIINRDHFMYEPIYEHQVLDSDFLKTMLDKYGIVPINSGIIDELYPEAIIEILMAVVRPRDAIRFLDIVNKNQLTEDSVKNYIINDIRRGKIDYYIPYVEDFLEDRTEDLGIYANIFFEDAIDITKLDITKTELEHISKYINYYTTYIDHIVNIILQNNYIDILASIIDYVQDVLTEELCIRIVCESTNPVPVTSLPIHSTLVMVMCIQMKYVDIVEFLDEIDIDTLIEKGADPITEYTFTTRWYNKHNDLITLYIKKYGFCPMMMKRLMFEYPLTKEASDHLLKTMDENRGAIMFFPRTICTLPYLLCCNYKLIQKPIPFKEENRNIVYKKTNRVLCFDLLENSAFKSLIKIDSIPGLKTYNMKDITYEKSNNIICVRFIPQESIHNEERRIKLQLFDIARLASYGLYYIPSRYLSSWTPVVNMIEGREYTNPQKIECLVILDLFSEEFIEYQNLGNAVSNKYELEYTISNYQAAINCLMSTLLIYLVLGSIRSISKTENFVLSILNIFYKGLKINELLSEPVSGVCIELDKIKDRASSGDSSFIFLKKNELSKTLSLCEKVCVETILDNNQSFKSSK</sequence>
<reference key="1">
    <citation type="journal article" date="1993" name="Virus Res.">
        <title>Analysis of the nucleotide sequence of a 43 kbp segment of the genome of variola virus India-1967 strain.</title>
        <authorList>
            <person name="Shchelkunov S.N."/>
            <person name="Blinov V.M."/>
            <person name="Resenchuk S.M."/>
            <person name="Totmenin A.V."/>
            <person name="Sandakhchiev L.S."/>
        </authorList>
    </citation>
    <scope>NUCLEOTIDE SEQUENCE [GENOMIC DNA]</scope>
    <source>
        <strain>India-1967 / Isolate Ind3</strain>
    </source>
</reference>
<reference key="2">
    <citation type="journal article" date="1993" name="FEBS Lett.">
        <title>Genes of variola and vaccinia viruses necessary to overcome the host protective mechanisms.</title>
        <authorList>
            <person name="Shchelkunov S.N."/>
            <person name="Blinov V.M."/>
            <person name="Sandakhchiev L.S."/>
        </authorList>
    </citation>
    <scope>NUCLEOTIDE SEQUENCE [GENOMIC DNA]</scope>
    <source>
        <strain>India-1967 / Isolate Ind3</strain>
    </source>
</reference>
<feature type="chain" id="PRO_0000099445" description="Protein OPG064">
    <location>
        <begin position="1"/>
        <end position="737"/>
    </location>
</feature>
<feature type="modified residue" description="N-acetylmethionine; by host" evidence="1">
    <location>
        <position position="1"/>
    </location>
</feature>
<feature type="disulfide bond" evidence="1">
    <location>
        <begin position="496"/>
        <end position="535"/>
    </location>
</feature>
<organism>
    <name type="scientific">Variola virus (isolate Human/India/Ind3/1967)</name>
    <name type="common">VARV</name>
    <name type="synonym">Smallpox virus</name>
    <dbReference type="NCBI Taxonomy" id="587200"/>
    <lineage>
        <taxon>Viruses</taxon>
        <taxon>Varidnaviria</taxon>
        <taxon>Bamfordvirae</taxon>
        <taxon>Nucleocytoviricota</taxon>
        <taxon>Pokkesviricetes</taxon>
        <taxon>Chitovirales</taxon>
        <taxon>Poxviridae</taxon>
        <taxon>Chordopoxvirinae</taxon>
        <taxon>Orthopoxvirus</taxon>
        <taxon>Variola virus</taxon>
    </lineage>
</organism>
<keyword id="KW-0007">Acetylation</keyword>
<keyword id="KW-1015">Disulfide bond</keyword>
<keyword id="KW-0244">Early protein</keyword>
<keyword id="KW-1185">Reference proteome</keyword>